<name>GLPK_XYLFM</name>
<reference key="1">
    <citation type="journal article" date="2010" name="J. Bacteriol.">
        <title>Whole genome sequences of two Xylella fastidiosa strains (M12 and M23) causing almond leaf scorch disease in California.</title>
        <authorList>
            <person name="Chen J."/>
            <person name="Xie G."/>
            <person name="Han S."/>
            <person name="Chertkov O."/>
            <person name="Sims D."/>
            <person name="Civerolo E.L."/>
        </authorList>
    </citation>
    <scope>NUCLEOTIDE SEQUENCE [LARGE SCALE GENOMIC DNA]</scope>
    <source>
        <strain>M12</strain>
    </source>
</reference>
<keyword id="KW-0067">ATP-binding</keyword>
<keyword id="KW-0319">Glycerol metabolism</keyword>
<keyword id="KW-0418">Kinase</keyword>
<keyword id="KW-0547">Nucleotide-binding</keyword>
<keyword id="KW-0808">Transferase</keyword>
<evidence type="ECO:0000255" key="1">
    <source>
        <dbReference type="HAMAP-Rule" id="MF_00186"/>
    </source>
</evidence>
<protein>
    <recommendedName>
        <fullName evidence="1">Glycerol kinase</fullName>
        <ecNumber evidence="1">2.7.1.30</ecNumber>
    </recommendedName>
    <alternativeName>
        <fullName evidence="1">ATP:glycerol 3-phosphotransferase</fullName>
    </alternativeName>
    <alternativeName>
        <fullName evidence="1">Glycerokinase</fullName>
        <shortName evidence="1">GK</shortName>
    </alternativeName>
</protein>
<organism>
    <name type="scientific">Xylella fastidiosa (strain M12)</name>
    <dbReference type="NCBI Taxonomy" id="405440"/>
    <lineage>
        <taxon>Bacteria</taxon>
        <taxon>Pseudomonadati</taxon>
        <taxon>Pseudomonadota</taxon>
        <taxon>Gammaproteobacteria</taxon>
        <taxon>Lysobacterales</taxon>
        <taxon>Lysobacteraceae</taxon>
        <taxon>Xylella</taxon>
    </lineage>
</organism>
<feature type="chain" id="PRO_1000098776" description="Glycerol kinase">
    <location>
        <begin position="1"/>
        <end position="499"/>
    </location>
</feature>
<feature type="binding site" evidence="1">
    <location>
        <position position="13"/>
    </location>
    <ligand>
        <name>ADP</name>
        <dbReference type="ChEBI" id="CHEBI:456216"/>
    </ligand>
</feature>
<feature type="binding site" evidence="1">
    <location>
        <position position="13"/>
    </location>
    <ligand>
        <name>ATP</name>
        <dbReference type="ChEBI" id="CHEBI:30616"/>
    </ligand>
</feature>
<feature type="binding site" evidence="1">
    <location>
        <position position="13"/>
    </location>
    <ligand>
        <name>sn-glycerol 3-phosphate</name>
        <dbReference type="ChEBI" id="CHEBI:57597"/>
    </ligand>
</feature>
<feature type="binding site" evidence="1">
    <location>
        <position position="14"/>
    </location>
    <ligand>
        <name>ATP</name>
        <dbReference type="ChEBI" id="CHEBI:30616"/>
    </ligand>
</feature>
<feature type="binding site" evidence="1">
    <location>
        <position position="15"/>
    </location>
    <ligand>
        <name>ATP</name>
        <dbReference type="ChEBI" id="CHEBI:30616"/>
    </ligand>
</feature>
<feature type="binding site" evidence="1">
    <location>
        <position position="17"/>
    </location>
    <ligand>
        <name>ADP</name>
        <dbReference type="ChEBI" id="CHEBI:456216"/>
    </ligand>
</feature>
<feature type="binding site" evidence="1">
    <location>
        <position position="83"/>
    </location>
    <ligand>
        <name>glycerol</name>
        <dbReference type="ChEBI" id="CHEBI:17754"/>
    </ligand>
</feature>
<feature type="binding site" evidence="1">
    <location>
        <position position="83"/>
    </location>
    <ligand>
        <name>sn-glycerol 3-phosphate</name>
        <dbReference type="ChEBI" id="CHEBI:57597"/>
    </ligand>
</feature>
<feature type="binding site" evidence="1">
    <location>
        <position position="84"/>
    </location>
    <ligand>
        <name>glycerol</name>
        <dbReference type="ChEBI" id="CHEBI:17754"/>
    </ligand>
</feature>
<feature type="binding site" evidence="1">
    <location>
        <position position="84"/>
    </location>
    <ligand>
        <name>sn-glycerol 3-phosphate</name>
        <dbReference type="ChEBI" id="CHEBI:57597"/>
    </ligand>
</feature>
<feature type="binding site" evidence="1">
    <location>
        <position position="135"/>
    </location>
    <ligand>
        <name>glycerol</name>
        <dbReference type="ChEBI" id="CHEBI:17754"/>
    </ligand>
</feature>
<feature type="binding site" evidence="1">
    <location>
        <position position="135"/>
    </location>
    <ligand>
        <name>sn-glycerol 3-phosphate</name>
        <dbReference type="ChEBI" id="CHEBI:57597"/>
    </ligand>
</feature>
<feature type="binding site" evidence="1">
    <location>
        <position position="245"/>
    </location>
    <ligand>
        <name>glycerol</name>
        <dbReference type="ChEBI" id="CHEBI:17754"/>
    </ligand>
</feature>
<feature type="binding site" evidence="1">
    <location>
        <position position="245"/>
    </location>
    <ligand>
        <name>sn-glycerol 3-phosphate</name>
        <dbReference type="ChEBI" id="CHEBI:57597"/>
    </ligand>
</feature>
<feature type="binding site" evidence="1">
    <location>
        <position position="246"/>
    </location>
    <ligand>
        <name>glycerol</name>
        <dbReference type="ChEBI" id="CHEBI:17754"/>
    </ligand>
</feature>
<feature type="binding site" evidence="1">
    <location>
        <position position="267"/>
    </location>
    <ligand>
        <name>ADP</name>
        <dbReference type="ChEBI" id="CHEBI:456216"/>
    </ligand>
</feature>
<feature type="binding site" evidence="1">
    <location>
        <position position="267"/>
    </location>
    <ligand>
        <name>ATP</name>
        <dbReference type="ChEBI" id="CHEBI:30616"/>
    </ligand>
</feature>
<feature type="binding site" evidence="1">
    <location>
        <position position="310"/>
    </location>
    <ligand>
        <name>ADP</name>
        <dbReference type="ChEBI" id="CHEBI:456216"/>
    </ligand>
</feature>
<feature type="binding site" evidence="1">
    <location>
        <position position="310"/>
    </location>
    <ligand>
        <name>ATP</name>
        <dbReference type="ChEBI" id="CHEBI:30616"/>
    </ligand>
</feature>
<feature type="binding site" evidence="1">
    <location>
        <position position="314"/>
    </location>
    <ligand>
        <name>ATP</name>
        <dbReference type="ChEBI" id="CHEBI:30616"/>
    </ligand>
</feature>
<feature type="binding site" evidence="1">
    <location>
        <position position="411"/>
    </location>
    <ligand>
        <name>ADP</name>
        <dbReference type="ChEBI" id="CHEBI:456216"/>
    </ligand>
</feature>
<feature type="binding site" evidence="1">
    <location>
        <position position="411"/>
    </location>
    <ligand>
        <name>ATP</name>
        <dbReference type="ChEBI" id="CHEBI:30616"/>
    </ligand>
</feature>
<feature type="binding site" evidence="1">
    <location>
        <position position="415"/>
    </location>
    <ligand>
        <name>ADP</name>
        <dbReference type="ChEBI" id="CHEBI:456216"/>
    </ligand>
</feature>
<comment type="function">
    <text evidence="1">Key enzyme in the regulation of glycerol uptake and metabolism. Catalyzes the phosphorylation of glycerol to yield sn-glycerol 3-phosphate.</text>
</comment>
<comment type="catalytic activity">
    <reaction evidence="1">
        <text>glycerol + ATP = sn-glycerol 3-phosphate + ADP + H(+)</text>
        <dbReference type="Rhea" id="RHEA:21644"/>
        <dbReference type="ChEBI" id="CHEBI:15378"/>
        <dbReference type="ChEBI" id="CHEBI:17754"/>
        <dbReference type="ChEBI" id="CHEBI:30616"/>
        <dbReference type="ChEBI" id="CHEBI:57597"/>
        <dbReference type="ChEBI" id="CHEBI:456216"/>
        <dbReference type="EC" id="2.7.1.30"/>
    </reaction>
</comment>
<comment type="activity regulation">
    <text evidence="1">Inhibited by fructose 1,6-bisphosphate (FBP).</text>
</comment>
<comment type="pathway">
    <text evidence="1">Polyol metabolism; glycerol degradation via glycerol kinase pathway; sn-glycerol 3-phosphate from glycerol: step 1/1.</text>
</comment>
<comment type="similarity">
    <text evidence="1">Belongs to the FGGY kinase family.</text>
</comment>
<accession>B0U3F2</accession>
<dbReference type="EC" id="2.7.1.30" evidence="1"/>
<dbReference type="EMBL" id="CP000941">
    <property type="protein sequence ID" value="ACA12381.1"/>
    <property type="molecule type" value="Genomic_DNA"/>
</dbReference>
<dbReference type="RefSeq" id="WP_004083444.1">
    <property type="nucleotide sequence ID" value="NC_010513.1"/>
</dbReference>
<dbReference type="SMR" id="B0U3F2"/>
<dbReference type="KEGG" id="xfm:Xfasm12_1461"/>
<dbReference type="HOGENOM" id="CLU_009281_2_3_6"/>
<dbReference type="UniPathway" id="UPA00618">
    <property type="reaction ID" value="UER00672"/>
</dbReference>
<dbReference type="GO" id="GO:0005829">
    <property type="term" value="C:cytosol"/>
    <property type="evidence" value="ECO:0007669"/>
    <property type="project" value="TreeGrafter"/>
</dbReference>
<dbReference type="GO" id="GO:0005524">
    <property type="term" value="F:ATP binding"/>
    <property type="evidence" value="ECO:0007669"/>
    <property type="project" value="UniProtKB-UniRule"/>
</dbReference>
<dbReference type="GO" id="GO:0004370">
    <property type="term" value="F:glycerol kinase activity"/>
    <property type="evidence" value="ECO:0000250"/>
    <property type="project" value="UniProtKB"/>
</dbReference>
<dbReference type="GO" id="GO:0019563">
    <property type="term" value="P:glycerol catabolic process"/>
    <property type="evidence" value="ECO:0007669"/>
    <property type="project" value="UniProtKB-UniRule"/>
</dbReference>
<dbReference type="GO" id="GO:0006071">
    <property type="term" value="P:glycerol metabolic process"/>
    <property type="evidence" value="ECO:0000250"/>
    <property type="project" value="UniProtKB"/>
</dbReference>
<dbReference type="GO" id="GO:0006072">
    <property type="term" value="P:glycerol-3-phosphate metabolic process"/>
    <property type="evidence" value="ECO:0007669"/>
    <property type="project" value="InterPro"/>
</dbReference>
<dbReference type="CDD" id="cd07786">
    <property type="entry name" value="FGGY_EcGK_like"/>
    <property type="match status" value="1"/>
</dbReference>
<dbReference type="FunFam" id="3.30.420.40:FF:000007">
    <property type="entry name" value="Glycerol kinase"/>
    <property type="match status" value="1"/>
</dbReference>
<dbReference type="FunFam" id="3.30.420.40:FF:000008">
    <property type="entry name" value="Glycerol kinase"/>
    <property type="match status" value="1"/>
</dbReference>
<dbReference type="Gene3D" id="3.30.420.40">
    <property type="match status" value="2"/>
</dbReference>
<dbReference type="HAMAP" id="MF_00186">
    <property type="entry name" value="Glycerol_kin"/>
    <property type="match status" value="1"/>
</dbReference>
<dbReference type="InterPro" id="IPR043129">
    <property type="entry name" value="ATPase_NBD"/>
</dbReference>
<dbReference type="InterPro" id="IPR000577">
    <property type="entry name" value="Carb_kinase_FGGY"/>
</dbReference>
<dbReference type="InterPro" id="IPR018483">
    <property type="entry name" value="Carb_kinase_FGGY_CS"/>
</dbReference>
<dbReference type="InterPro" id="IPR018485">
    <property type="entry name" value="FGGY_C"/>
</dbReference>
<dbReference type="InterPro" id="IPR018484">
    <property type="entry name" value="FGGY_N"/>
</dbReference>
<dbReference type="InterPro" id="IPR005999">
    <property type="entry name" value="Glycerol_kin"/>
</dbReference>
<dbReference type="NCBIfam" id="TIGR01311">
    <property type="entry name" value="glycerol_kin"/>
    <property type="match status" value="1"/>
</dbReference>
<dbReference type="NCBIfam" id="NF000756">
    <property type="entry name" value="PRK00047.1"/>
    <property type="match status" value="1"/>
</dbReference>
<dbReference type="PANTHER" id="PTHR10196:SF69">
    <property type="entry name" value="GLYCEROL KINASE"/>
    <property type="match status" value="1"/>
</dbReference>
<dbReference type="PANTHER" id="PTHR10196">
    <property type="entry name" value="SUGAR KINASE"/>
    <property type="match status" value="1"/>
</dbReference>
<dbReference type="Pfam" id="PF02782">
    <property type="entry name" value="FGGY_C"/>
    <property type="match status" value="1"/>
</dbReference>
<dbReference type="Pfam" id="PF00370">
    <property type="entry name" value="FGGY_N"/>
    <property type="match status" value="1"/>
</dbReference>
<dbReference type="PIRSF" id="PIRSF000538">
    <property type="entry name" value="GlpK"/>
    <property type="match status" value="1"/>
</dbReference>
<dbReference type="SUPFAM" id="SSF53067">
    <property type="entry name" value="Actin-like ATPase domain"/>
    <property type="match status" value="2"/>
</dbReference>
<dbReference type="PROSITE" id="PS00933">
    <property type="entry name" value="FGGY_KINASES_1"/>
    <property type="match status" value="1"/>
</dbReference>
<dbReference type="PROSITE" id="PS00445">
    <property type="entry name" value="FGGY_KINASES_2"/>
    <property type="match status" value="1"/>
</dbReference>
<gene>
    <name evidence="1" type="primary">glpK</name>
    <name type="ordered locus">Xfasm12_1461</name>
</gene>
<proteinExistence type="inferred from homology"/>
<sequence length="499" mass="55261">MKKKYILAIDQGTTSSRAILFDHKGRITGMAQREFTQIFPQPGWVEHNPRDIMTSVYTTITELLNNTQIDVRAIAGIGITNQRETTVIWNRQTGQPIYNAIVWQSRQTKNICDQLTTAGYQDLVHAKTGLLMDAYFSGTKVKWILDHAENAHTQAARGELAFGTIDTWIIWNLTGGQVHVTDYSNASRTLMYDIHALRWDPDLLTMLDIPAAILPDVRSSSEIYGLTQTPYFHGEQIPIAGIAGDQQAALFGQACFEPGMAKNTYGTGCFMLMHTGKKAVESKNGLLTTIAWGLNGEIEYALEGSIFIAGSVVQWLRDGLRMFGKASDSQAYADRVSDNGGVYVVPAFVGLGAPYWRSDVRGAVFGLTRSTTKEHFVRAALESMAYQTRDVLSAMQADADIELKELRTDGAAITNDFMAQFQSDILAVPVLRSQIAETTALGAAYLAGLATGFWSSREEMTQHWAINRCFKPQMDKEQREHLYAGWKQAVAATLGFRVA</sequence>